<accession>P01801</accession>
<name>HVM32_MOUSE</name>
<feature type="chain" id="PRO_0000059886" description="Ig heavy chain V-III region J606">
    <location>
        <begin position="1"/>
        <end position="115" status="greater than"/>
    </location>
</feature>
<feature type="domain" description="Ig-like">
    <location>
        <begin position="1"/>
        <end position="114"/>
    </location>
</feature>
<feature type="disulfide bond" evidence="1">
    <location>
        <begin position="22"/>
        <end position="98"/>
    </location>
</feature>
<feature type="non-terminal residue">
    <location>
        <position position="115"/>
    </location>
</feature>
<feature type="strand" evidence="2">
    <location>
        <begin position="3"/>
        <end position="7"/>
    </location>
</feature>
<feature type="strand" evidence="3">
    <location>
        <begin position="10"/>
        <end position="12"/>
    </location>
</feature>
<feature type="strand" evidence="2">
    <location>
        <begin position="18"/>
        <end position="27"/>
    </location>
</feature>
<feature type="helix" evidence="2">
    <location>
        <begin position="29"/>
        <end position="31"/>
    </location>
</feature>
<feature type="strand" evidence="2">
    <location>
        <begin position="33"/>
        <end position="40"/>
    </location>
</feature>
<feature type="turn" evidence="2">
    <location>
        <begin position="41"/>
        <end position="43"/>
    </location>
</feature>
<feature type="strand" evidence="2">
    <location>
        <begin position="44"/>
        <end position="51"/>
    </location>
</feature>
<feature type="helix" evidence="2">
    <location>
        <begin position="54"/>
        <end position="56"/>
    </location>
</feature>
<feature type="strand" evidence="2">
    <location>
        <begin position="60"/>
        <end position="62"/>
    </location>
</feature>
<feature type="turn" evidence="2">
    <location>
        <begin position="64"/>
        <end position="69"/>
    </location>
</feature>
<feature type="strand" evidence="2">
    <location>
        <begin position="70"/>
        <end position="75"/>
    </location>
</feature>
<feature type="turn" evidence="2">
    <location>
        <begin position="76"/>
        <end position="79"/>
    </location>
</feature>
<feature type="strand" evidence="2">
    <location>
        <begin position="80"/>
        <end position="85"/>
    </location>
</feature>
<feature type="helix" evidence="2">
    <location>
        <begin position="90"/>
        <end position="92"/>
    </location>
</feature>
<feature type="strand" evidence="2">
    <location>
        <begin position="94"/>
        <end position="102"/>
    </location>
</feature>
<feature type="strand" evidence="4">
    <location>
        <begin position="103"/>
        <end position="105"/>
    </location>
</feature>
<feature type="strand" evidence="2">
    <location>
        <begin position="109"/>
        <end position="113"/>
    </location>
</feature>
<sequence length="115" mass="12810">EVKLEESGGGLVQPGGSMKLSCVASGFTFSNYWMNWVRQSPEKGLEWVAEIRLKSNNYATHYAESVKGRFTISRDDSKSSVYLQMNNLRAEDTGIYYCTTGFAYWGQGTLVTVSA</sequence>
<dbReference type="PIR" id="C92811">
    <property type="entry name" value="AVMS06"/>
</dbReference>
<dbReference type="PDB" id="1M71">
    <property type="method" value="X-ray"/>
    <property type="resolution" value="2.80 A"/>
    <property type="chains" value="B=1-114"/>
</dbReference>
<dbReference type="PDB" id="1M7D">
    <property type="method" value="X-ray"/>
    <property type="resolution" value="2.30 A"/>
    <property type="chains" value="B=1-114"/>
</dbReference>
<dbReference type="PDB" id="1M7I">
    <property type="method" value="X-ray"/>
    <property type="resolution" value="2.50 A"/>
    <property type="chains" value="B=1-114"/>
</dbReference>
<dbReference type="PDB" id="1PZ5">
    <property type="method" value="X-ray"/>
    <property type="resolution" value="1.80 A"/>
    <property type="chains" value="B=1-114"/>
</dbReference>
<dbReference type="PDB" id="1SM3">
    <property type="method" value="X-ray"/>
    <property type="resolution" value="1.95 A"/>
    <property type="chains" value="H=2-114"/>
</dbReference>
<dbReference type="PDB" id="2DLF">
    <property type="method" value="X-ray"/>
    <property type="resolution" value="1.55 A"/>
    <property type="chains" value="H=1-115"/>
</dbReference>
<dbReference type="PDB" id="5A2I">
    <property type="method" value="X-ray"/>
    <property type="resolution" value="1.88 A"/>
    <property type="chains" value="H=6-99, H=102-115"/>
</dbReference>
<dbReference type="PDB" id="5A2J">
    <property type="method" value="X-ray"/>
    <property type="resolution" value="1.65 A"/>
    <property type="chains" value="H=6-115"/>
</dbReference>
<dbReference type="PDB" id="5A2K">
    <property type="method" value="X-ray"/>
    <property type="resolution" value="1.70 A"/>
    <property type="chains" value="H=6-99, H=102-115"/>
</dbReference>
<dbReference type="PDB" id="5A2L">
    <property type="method" value="X-ray"/>
    <property type="resolution" value="1.79 A"/>
    <property type="chains" value="H=6-115"/>
</dbReference>
<dbReference type="PDB" id="5N7B">
    <property type="method" value="X-ray"/>
    <property type="resolution" value="1.70 A"/>
    <property type="chains" value="H=1-114"/>
</dbReference>
<dbReference type="PDB" id="5OWP">
    <property type="method" value="X-ray"/>
    <property type="resolution" value="1.85 A"/>
    <property type="chains" value="H=6-111"/>
</dbReference>
<dbReference type="PDBsum" id="1M71"/>
<dbReference type="PDBsum" id="1M7D"/>
<dbReference type="PDBsum" id="1M7I"/>
<dbReference type="PDBsum" id="1PZ5"/>
<dbReference type="PDBsum" id="1SM3"/>
<dbReference type="PDBsum" id="2DLF"/>
<dbReference type="PDBsum" id="5A2I"/>
<dbReference type="PDBsum" id="5A2J"/>
<dbReference type="PDBsum" id="5A2K"/>
<dbReference type="PDBsum" id="5A2L"/>
<dbReference type="PDBsum" id="5N7B"/>
<dbReference type="PDBsum" id="5OWP"/>
<dbReference type="SMR" id="P01801"/>
<dbReference type="FunCoup" id="P01801">
    <property type="interactions" value="545"/>
</dbReference>
<dbReference type="MINT" id="P01801"/>
<dbReference type="STRING" id="10090.ENSMUSP00000136790"/>
<dbReference type="InParanoid" id="P01801"/>
<dbReference type="EvolutionaryTrace" id="P01801"/>
<dbReference type="Proteomes" id="UP000000589">
    <property type="component" value="Unplaced"/>
</dbReference>
<dbReference type="RNAct" id="P01801">
    <property type="molecule type" value="protein"/>
</dbReference>
<dbReference type="GO" id="GO:0005576">
    <property type="term" value="C:extracellular region"/>
    <property type="evidence" value="ECO:0007669"/>
    <property type="project" value="UniProtKB-ARBA"/>
</dbReference>
<dbReference type="GO" id="GO:0019814">
    <property type="term" value="C:immunoglobulin complex"/>
    <property type="evidence" value="ECO:0007669"/>
    <property type="project" value="UniProtKB-KW"/>
</dbReference>
<dbReference type="GO" id="GO:0003823">
    <property type="term" value="F:antigen binding"/>
    <property type="evidence" value="ECO:0000318"/>
    <property type="project" value="GO_Central"/>
</dbReference>
<dbReference type="GO" id="GO:0016064">
    <property type="term" value="P:immunoglobulin mediated immune response"/>
    <property type="evidence" value="ECO:0000318"/>
    <property type="project" value="GO_Central"/>
</dbReference>
<dbReference type="CDD" id="cd04981">
    <property type="entry name" value="IgV_H"/>
    <property type="match status" value="1"/>
</dbReference>
<dbReference type="FunFam" id="2.60.40.10:FF:001372">
    <property type="entry name" value="Ig heavy chain V region M603"/>
    <property type="match status" value="1"/>
</dbReference>
<dbReference type="Gene3D" id="2.60.40.10">
    <property type="entry name" value="Immunoglobulins"/>
    <property type="match status" value="1"/>
</dbReference>
<dbReference type="InterPro" id="IPR007110">
    <property type="entry name" value="Ig-like_dom"/>
</dbReference>
<dbReference type="InterPro" id="IPR036179">
    <property type="entry name" value="Ig-like_dom_sf"/>
</dbReference>
<dbReference type="InterPro" id="IPR013783">
    <property type="entry name" value="Ig-like_fold"/>
</dbReference>
<dbReference type="InterPro" id="IPR003599">
    <property type="entry name" value="Ig_sub"/>
</dbReference>
<dbReference type="InterPro" id="IPR013106">
    <property type="entry name" value="Ig_V-set"/>
</dbReference>
<dbReference type="InterPro" id="IPR050199">
    <property type="entry name" value="IgHV"/>
</dbReference>
<dbReference type="PANTHER" id="PTHR23266">
    <property type="entry name" value="IMMUNOGLOBULIN HEAVY CHAIN"/>
    <property type="match status" value="1"/>
</dbReference>
<dbReference type="Pfam" id="PF07686">
    <property type="entry name" value="V-set"/>
    <property type="match status" value="1"/>
</dbReference>
<dbReference type="SMART" id="SM00409">
    <property type="entry name" value="IG"/>
    <property type="match status" value="1"/>
</dbReference>
<dbReference type="SMART" id="SM00406">
    <property type="entry name" value="IGv"/>
    <property type="match status" value="1"/>
</dbReference>
<dbReference type="SUPFAM" id="SSF48726">
    <property type="entry name" value="Immunoglobulin"/>
    <property type="match status" value="1"/>
</dbReference>
<dbReference type="PROSITE" id="PS50835">
    <property type="entry name" value="IG_LIKE"/>
    <property type="match status" value="1"/>
</dbReference>
<reference key="1">
    <citation type="journal article" date="1982" name="J. Immunol.">
        <title>The complete V domain amino acid sequences of two myeloma inulin-binding proteins.</title>
        <authorList>
            <person name="Johnson N."/>
            <person name="Slankard J."/>
            <person name="Paul L."/>
            <person name="Hood L."/>
        </authorList>
    </citation>
    <scope>PROTEIN SEQUENCE</scope>
</reference>
<evidence type="ECO:0000255" key="1">
    <source>
        <dbReference type="PROSITE-ProRule" id="PRU00114"/>
    </source>
</evidence>
<evidence type="ECO:0007829" key="2">
    <source>
        <dbReference type="PDB" id="2DLF"/>
    </source>
</evidence>
<evidence type="ECO:0007829" key="3">
    <source>
        <dbReference type="PDB" id="5A2J"/>
    </source>
</evidence>
<evidence type="ECO:0007829" key="4">
    <source>
        <dbReference type="PDB" id="5OWP"/>
    </source>
</evidence>
<keyword id="KW-0002">3D-structure</keyword>
<keyword id="KW-1064">Adaptive immunity</keyword>
<keyword id="KW-0903">Direct protein sequencing</keyword>
<keyword id="KW-1015">Disulfide bond</keyword>
<keyword id="KW-0391">Immunity</keyword>
<keyword id="KW-1280">Immunoglobulin</keyword>
<keyword id="KW-1185">Reference proteome</keyword>
<organism>
    <name type="scientific">Mus musculus</name>
    <name type="common">Mouse</name>
    <dbReference type="NCBI Taxonomy" id="10090"/>
    <lineage>
        <taxon>Eukaryota</taxon>
        <taxon>Metazoa</taxon>
        <taxon>Chordata</taxon>
        <taxon>Craniata</taxon>
        <taxon>Vertebrata</taxon>
        <taxon>Euteleostomi</taxon>
        <taxon>Mammalia</taxon>
        <taxon>Eutheria</taxon>
        <taxon>Euarchontoglires</taxon>
        <taxon>Glires</taxon>
        <taxon>Rodentia</taxon>
        <taxon>Myomorpha</taxon>
        <taxon>Muroidea</taxon>
        <taxon>Muridae</taxon>
        <taxon>Murinae</taxon>
        <taxon>Mus</taxon>
        <taxon>Mus</taxon>
    </lineage>
</organism>
<protein>
    <recommendedName>
        <fullName>Ig heavy chain V-III region J606</fullName>
    </recommendedName>
</protein>
<proteinExistence type="evidence at protein level"/>
<comment type="miscellaneous">
    <text>This chain was isolated from a myeloma protein that binds inulin.</text>
</comment>